<comment type="function">
    <text evidence="1">Essential component of the SCF (SKP1-CUL1-F-box protein) E3 ubiquitin ligase complexes, which mediate the ubiquitination and subsequent proteasomal degradation of target proteins. Controls sulfur metabolite repression, probably by mediating the inactivation or degradation of the metR transcription factor (By similarity).</text>
</comment>
<comment type="pathway">
    <text>Protein modification; protein ubiquitination.</text>
</comment>
<comment type="subunit">
    <text evidence="1">Component of the SCF (SKP1-CUL1-F-box protein) E3 ubiquitin ligase complexes.</text>
</comment>
<comment type="similarity">
    <text evidence="2">Belongs to the SKP1 family.</text>
</comment>
<keyword id="KW-1185">Reference proteome</keyword>
<keyword id="KW-0833">Ubl conjugation pathway</keyword>
<accession>Q5KU00</accession>
<dbReference type="EMBL" id="AB063104">
    <property type="protein sequence ID" value="BAD83607.1"/>
    <property type="molecule type" value="Genomic_DNA"/>
</dbReference>
<dbReference type="EMBL" id="AB070846">
    <property type="protein sequence ID" value="BAD83610.1"/>
    <property type="molecule type" value="Genomic_DNA"/>
</dbReference>
<dbReference type="EMBL" id="BA000049">
    <property type="protein sequence ID" value="BAE55074.1"/>
    <property type="molecule type" value="Genomic_DNA"/>
</dbReference>
<dbReference type="RefSeq" id="XP_001817076.1">
    <property type="nucleotide sequence ID" value="XM_001817024.2"/>
</dbReference>
<dbReference type="RefSeq" id="XP_003189072.1">
    <property type="nucleotide sequence ID" value="XM_003189024.1"/>
</dbReference>
<dbReference type="SMR" id="Q5KU00"/>
<dbReference type="STRING" id="510516.Q5KU00"/>
<dbReference type="EnsemblFungi" id="BAE55074">
    <property type="protein sequence ID" value="BAE55074"/>
    <property type="gene ID" value="AO090009000653"/>
</dbReference>
<dbReference type="GeneID" id="5989006"/>
<dbReference type="KEGG" id="aor:AO090009000653"/>
<dbReference type="VEuPathDB" id="FungiDB:AO090009000653"/>
<dbReference type="HOGENOM" id="CLU_059252_4_0_1"/>
<dbReference type="OMA" id="DKYTASM"/>
<dbReference type="OrthoDB" id="13110at5052"/>
<dbReference type="UniPathway" id="UPA00143"/>
<dbReference type="Proteomes" id="UP000006564">
    <property type="component" value="Chromosome 1"/>
</dbReference>
<dbReference type="GO" id="GO:0031518">
    <property type="term" value="C:CBF3 complex"/>
    <property type="evidence" value="ECO:0007669"/>
    <property type="project" value="EnsemblFungi"/>
</dbReference>
<dbReference type="GO" id="GO:0000776">
    <property type="term" value="C:kinetochore"/>
    <property type="evidence" value="ECO:0007669"/>
    <property type="project" value="EnsemblFungi"/>
</dbReference>
<dbReference type="GO" id="GO:0043224">
    <property type="term" value="C:nuclear SCF ubiquitin ligase complex"/>
    <property type="evidence" value="ECO:0007669"/>
    <property type="project" value="EnsemblFungi"/>
</dbReference>
<dbReference type="GO" id="GO:0043291">
    <property type="term" value="C:RAVE complex"/>
    <property type="evidence" value="ECO:0007669"/>
    <property type="project" value="EnsemblFungi"/>
</dbReference>
<dbReference type="GO" id="GO:0017117">
    <property type="term" value="C:single-stranded DNA-dependent ATP-dependent DNA helicase complex"/>
    <property type="evidence" value="ECO:0007669"/>
    <property type="project" value="EnsemblFungi"/>
</dbReference>
<dbReference type="GO" id="GO:0003688">
    <property type="term" value="F:DNA replication origin binding"/>
    <property type="evidence" value="ECO:0007669"/>
    <property type="project" value="EnsemblFungi"/>
</dbReference>
<dbReference type="GO" id="GO:0061630">
    <property type="term" value="F:ubiquitin protein ligase activity"/>
    <property type="evidence" value="ECO:0007669"/>
    <property type="project" value="EnsemblFungi"/>
</dbReference>
<dbReference type="GO" id="GO:0010458">
    <property type="term" value="P:exit from mitosis"/>
    <property type="evidence" value="ECO:0007669"/>
    <property type="project" value="EnsemblFungi"/>
</dbReference>
<dbReference type="GO" id="GO:0000082">
    <property type="term" value="P:G1/S transition of mitotic cell cycle"/>
    <property type="evidence" value="ECO:0007669"/>
    <property type="project" value="EnsemblFungi"/>
</dbReference>
<dbReference type="GO" id="GO:0000086">
    <property type="term" value="P:G2/M transition of mitotic cell cycle"/>
    <property type="evidence" value="ECO:0007669"/>
    <property type="project" value="EnsemblFungi"/>
</dbReference>
<dbReference type="GO" id="GO:0051382">
    <property type="term" value="P:kinetochore assembly"/>
    <property type="evidence" value="ECO:0007669"/>
    <property type="project" value="EnsemblFungi"/>
</dbReference>
<dbReference type="GO" id="GO:0101026">
    <property type="term" value="P:mitotic nuclear membrane biogenesis"/>
    <property type="evidence" value="ECO:0007669"/>
    <property type="project" value="EnsemblFungi"/>
</dbReference>
<dbReference type="GO" id="GO:2000766">
    <property type="term" value="P:negative regulation of cytoplasmic translation"/>
    <property type="evidence" value="ECO:0007669"/>
    <property type="project" value="EnsemblFungi"/>
</dbReference>
<dbReference type="GO" id="GO:0045841">
    <property type="term" value="P:negative regulation of mitotic metaphase/anaphase transition"/>
    <property type="evidence" value="ECO:0007669"/>
    <property type="project" value="EnsemblFungi"/>
</dbReference>
<dbReference type="GO" id="GO:0010828">
    <property type="term" value="P:positive regulation of D-glucose transmembrane transport"/>
    <property type="evidence" value="ECO:0007669"/>
    <property type="project" value="EnsemblFungi"/>
</dbReference>
<dbReference type="GO" id="GO:0045116">
    <property type="term" value="P:protein neddylation"/>
    <property type="evidence" value="ECO:0007669"/>
    <property type="project" value="EnsemblFungi"/>
</dbReference>
<dbReference type="GO" id="GO:0016567">
    <property type="term" value="P:protein ubiquitination"/>
    <property type="evidence" value="ECO:0007669"/>
    <property type="project" value="UniProtKB-UniPathway"/>
</dbReference>
<dbReference type="GO" id="GO:0000018">
    <property type="term" value="P:regulation of DNA recombination"/>
    <property type="evidence" value="ECO:0007669"/>
    <property type="project" value="EnsemblFungi"/>
</dbReference>
<dbReference type="GO" id="GO:0007096">
    <property type="term" value="P:regulation of exit from mitosis"/>
    <property type="evidence" value="ECO:0007669"/>
    <property type="project" value="EnsemblFungi"/>
</dbReference>
<dbReference type="GO" id="GO:0043254">
    <property type="term" value="P:regulation of protein-containing complex assembly"/>
    <property type="evidence" value="ECO:0007669"/>
    <property type="project" value="EnsemblFungi"/>
</dbReference>
<dbReference type="GO" id="GO:0000712">
    <property type="term" value="P:resolution of meiotic recombination intermediates"/>
    <property type="evidence" value="ECO:0007669"/>
    <property type="project" value="EnsemblFungi"/>
</dbReference>
<dbReference type="GO" id="GO:0031146">
    <property type="term" value="P:SCF-dependent proteasomal ubiquitin-dependent protein catabolic process"/>
    <property type="evidence" value="ECO:0007669"/>
    <property type="project" value="EnsemblFungi"/>
</dbReference>
<dbReference type="GO" id="GO:0000921">
    <property type="term" value="P:septin ring assembly"/>
    <property type="evidence" value="ECO:0007669"/>
    <property type="project" value="EnsemblFungi"/>
</dbReference>
<dbReference type="GO" id="GO:0030466">
    <property type="term" value="P:silent mating-type cassette heterochromatin formation"/>
    <property type="evidence" value="ECO:0007669"/>
    <property type="project" value="EnsemblFungi"/>
</dbReference>
<dbReference type="GO" id="GO:0007035">
    <property type="term" value="P:vacuolar acidification"/>
    <property type="evidence" value="ECO:0007669"/>
    <property type="project" value="EnsemblFungi"/>
</dbReference>
<dbReference type="GO" id="GO:0070072">
    <property type="term" value="P:vacuolar proton-transporting V-type ATPase complex assembly"/>
    <property type="evidence" value="ECO:0007669"/>
    <property type="project" value="EnsemblFungi"/>
</dbReference>
<dbReference type="CDD" id="cd18322">
    <property type="entry name" value="BTB_POZ_SKP1"/>
    <property type="match status" value="1"/>
</dbReference>
<dbReference type="FunFam" id="3.30.710.10:FF:000026">
    <property type="entry name" value="E3 ubiquitin ligase complex SCF subunit"/>
    <property type="match status" value="1"/>
</dbReference>
<dbReference type="Gene3D" id="3.30.710.10">
    <property type="entry name" value="Potassium Channel Kv1.1, Chain A"/>
    <property type="match status" value="1"/>
</dbReference>
<dbReference type="InterPro" id="IPR016897">
    <property type="entry name" value="SKP1"/>
</dbReference>
<dbReference type="InterPro" id="IPR001232">
    <property type="entry name" value="SKP1-like"/>
</dbReference>
<dbReference type="InterPro" id="IPR036296">
    <property type="entry name" value="SKP1-like_dim_sf"/>
</dbReference>
<dbReference type="InterPro" id="IPR011333">
    <property type="entry name" value="SKP1/BTB/POZ_sf"/>
</dbReference>
<dbReference type="InterPro" id="IPR016072">
    <property type="entry name" value="Skp1_comp_dimer"/>
</dbReference>
<dbReference type="InterPro" id="IPR016073">
    <property type="entry name" value="Skp1_comp_POZ"/>
</dbReference>
<dbReference type="PANTHER" id="PTHR11165">
    <property type="entry name" value="SKP1"/>
    <property type="match status" value="1"/>
</dbReference>
<dbReference type="Pfam" id="PF01466">
    <property type="entry name" value="Skp1"/>
    <property type="match status" value="1"/>
</dbReference>
<dbReference type="Pfam" id="PF03931">
    <property type="entry name" value="Skp1_POZ"/>
    <property type="match status" value="1"/>
</dbReference>
<dbReference type="PIRSF" id="PIRSF028729">
    <property type="entry name" value="E3_ubiquit_lig_SCF_Skp"/>
    <property type="match status" value="1"/>
</dbReference>
<dbReference type="SMART" id="SM00512">
    <property type="entry name" value="Skp1"/>
    <property type="match status" value="1"/>
</dbReference>
<dbReference type="SUPFAM" id="SSF54695">
    <property type="entry name" value="POZ domain"/>
    <property type="match status" value="1"/>
</dbReference>
<dbReference type="SUPFAM" id="SSF81382">
    <property type="entry name" value="Skp1 dimerisation domain-like"/>
    <property type="match status" value="1"/>
</dbReference>
<gene>
    <name type="primary">sconC</name>
    <name type="synonym">skpA</name>
    <name type="ORF">AO090009000653</name>
</gene>
<evidence type="ECO:0000250" key="1"/>
<evidence type="ECO:0000305" key="2"/>
<reference key="1">
    <citation type="submission" date="2001-06" db="EMBL/GenBank/DDBJ databases">
        <title>Cloning genomic DNA for sconC from Aspergillus oryzae.</title>
        <authorList>
            <person name="Sano M."/>
            <person name="Takase K."/>
            <person name="Yamamoto M."/>
            <person name="Machida M."/>
        </authorList>
    </citation>
    <scope>NUCLEOTIDE SEQUENCE [GENOMIC DNA]</scope>
</reference>
<reference key="2">
    <citation type="submission" date="2001-08" db="EMBL/GenBank/DDBJ databases">
        <title>Analysis of sulfur regulatory netwok in Aspergillus oryzae.</title>
        <authorList>
            <person name="Sano M."/>
            <person name="Takase K."/>
            <person name="Yamamoto M."/>
            <person name="Machida M."/>
        </authorList>
    </citation>
    <scope>NUCLEOTIDE SEQUENCE [GENOMIC DNA]</scope>
</reference>
<reference key="3">
    <citation type="journal article" date="2005" name="Nature">
        <title>Genome sequencing and analysis of Aspergillus oryzae.</title>
        <authorList>
            <person name="Machida M."/>
            <person name="Asai K."/>
            <person name="Sano M."/>
            <person name="Tanaka T."/>
            <person name="Kumagai T."/>
            <person name="Terai G."/>
            <person name="Kusumoto K."/>
            <person name="Arima T."/>
            <person name="Akita O."/>
            <person name="Kashiwagi Y."/>
            <person name="Abe K."/>
            <person name="Gomi K."/>
            <person name="Horiuchi H."/>
            <person name="Kitamoto K."/>
            <person name="Kobayashi T."/>
            <person name="Takeuchi M."/>
            <person name="Denning D.W."/>
            <person name="Galagan J.E."/>
            <person name="Nierman W.C."/>
            <person name="Yu J."/>
            <person name="Archer D.B."/>
            <person name="Bennett J.W."/>
            <person name="Bhatnagar D."/>
            <person name="Cleveland T.E."/>
            <person name="Fedorova N.D."/>
            <person name="Gotoh O."/>
            <person name="Horikawa H."/>
            <person name="Hosoyama A."/>
            <person name="Ichinomiya M."/>
            <person name="Igarashi R."/>
            <person name="Iwashita K."/>
            <person name="Juvvadi P.R."/>
            <person name="Kato M."/>
            <person name="Kato Y."/>
            <person name="Kin T."/>
            <person name="Kokubun A."/>
            <person name="Maeda H."/>
            <person name="Maeyama N."/>
            <person name="Maruyama J."/>
            <person name="Nagasaki H."/>
            <person name="Nakajima T."/>
            <person name="Oda K."/>
            <person name="Okada K."/>
            <person name="Paulsen I."/>
            <person name="Sakamoto K."/>
            <person name="Sawano T."/>
            <person name="Takahashi M."/>
            <person name="Takase K."/>
            <person name="Terabayashi Y."/>
            <person name="Wortman J.R."/>
            <person name="Yamada O."/>
            <person name="Yamagata Y."/>
            <person name="Anazawa H."/>
            <person name="Hata Y."/>
            <person name="Koide Y."/>
            <person name="Komori T."/>
            <person name="Koyama Y."/>
            <person name="Minetoki T."/>
            <person name="Suharnan S."/>
            <person name="Tanaka A."/>
            <person name="Isono K."/>
            <person name="Kuhara S."/>
            <person name="Ogasawara N."/>
            <person name="Kikuchi H."/>
        </authorList>
    </citation>
    <scope>NUCLEOTIDE SEQUENCE [LARGE SCALE GENOMIC DNA]</scope>
    <source>
        <strain>ATCC 42149 / RIB 40</strain>
    </source>
</reference>
<protein>
    <recommendedName>
        <fullName>E3 ubiquitin ligase complex SCF subunit sconC</fullName>
    </recommendedName>
    <alternativeName>
        <fullName>Sulfur controller C</fullName>
    </alternativeName>
    <alternativeName>
        <fullName>Sulfur metabolite repression control protein C</fullName>
    </alternativeName>
</protein>
<sequence length="161" mass="18465">MATPTLTFTSSDGVDIPVERDVAERSQLIKNMLEDLGETGEPIPIPNVNEAVLKKVIEWCTHHKNDPPSTGDDDDSRRKTTDIDEWDQKFMQVDQEMLFEIILAANYLDIKGLLDVGCKTVANMIKGKSPEEIRKTFNIQNDFTPEEEDQIRRENEWAEDR</sequence>
<organism>
    <name type="scientific">Aspergillus oryzae (strain ATCC 42149 / RIB 40)</name>
    <name type="common">Yellow koji mold</name>
    <dbReference type="NCBI Taxonomy" id="510516"/>
    <lineage>
        <taxon>Eukaryota</taxon>
        <taxon>Fungi</taxon>
        <taxon>Dikarya</taxon>
        <taxon>Ascomycota</taxon>
        <taxon>Pezizomycotina</taxon>
        <taxon>Eurotiomycetes</taxon>
        <taxon>Eurotiomycetidae</taxon>
        <taxon>Eurotiales</taxon>
        <taxon>Aspergillaceae</taxon>
        <taxon>Aspergillus</taxon>
        <taxon>Aspergillus subgen. Circumdati</taxon>
    </lineage>
</organism>
<proteinExistence type="inferred from homology"/>
<feature type="chain" id="PRO_0000397264" description="E3 ubiquitin ligase complex SCF subunit sconC">
    <location>
        <begin position="1"/>
        <end position="161"/>
    </location>
</feature>
<feature type="region of interest" description="Interaction with the F-box domain of F-box proteins" evidence="1">
    <location>
        <begin position="102"/>
        <end position="161"/>
    </location>
</feature>
<name>SKP1_ASPOR</name>